<organism>
    <name type="scientific">Homo sapiens</name>
    <name type="common">Human</name>
    <dbReference type="NCBI Taxonomy" id="9606"/>
    <lineage>
        <taxon>Eukaryota</taxon>
        <taxon>Metazoa</taxon>
        <taxon>Chordata</taxon>
        <taxon>Craniata</taxon>
        <taxon>Vertebrata</taxon>
        <taxon>Euteleostomi</taxon>
        <taxon>Mammalia</taxon>
        <taxon>Eutheria</taxon>
        <taxon>Euarchontoglires</taxon>
        <taxon>Primates</taxon>
        <taxon>Haplorrhini</taxon>
        <taxon>Catarrhini</taxon>
        <taxon>Hominidae</taxon>
        <taxon>Homo</taxon>
    </lineage>
</organism>
<comment type="function">
    <text>May have a transcription role in testis. May act as a competitor/regulator of TGIF2LX.</text>
</comment>
<comment type="interaction">
    <interactant intactId="EBI-8063723">
        <id>Q8IUE0</id>
    </interactant>
    <interactant intactId="EBI-10182361">
        <id>Q9NS73-5</id>
        <label>MBIP</label>
    </interactant>
    <organismsDiffer>false</organismsDiffer>
    <experiments>3</experiments>
</comment>
<comment type="interaction">
    <interactant intactId="EBI-8063723">
        <id>Q8IUE0</id>
    </interactant>
    <interactant intactId="EBI-8641936">
        <id>Q15742</id>
        <label>NAB2</label>
    </interactant>
    <organismsDiffer>false</organismsDiffer>
    <experiments>6</experiments>
</comment>
<comment type="subcellular location">
    <subcellularLocation>
        <location evidence="1">Nucleus</location>
    </subcellularLocation>
</comment>
<comment type="tissue specificity">
    <text>Specifically expressed in adult testis.</text>
</comment>
<comment type="similarity">
    <text evidence="3">Belongs to the TALE/TGIF homeobox family.</text>
</comment>
<reference key="1">
    <citation type="journal article" date="2002" name="Mamm. Genome">
        <title>The human-specific Yp11.2/Xq21.3 homology block encodes a potentially functional testis-specific TGIF-like retroposon.</title>
        <authorList>
            <person name="Blanco-Arias P."/>
            <person name="Sargent C.A."/>
            <person name="Affara N.A."/>
        </authorList>
    </citation>
    <scope>NUCLEOTIDE SEQUENCE [GENOMIC DNA]</scope>
    <source>
        <tissue>Testis</tissue>
    </source>
</reference>
<reference key="2">
    <citation type="journal article" date="2003" name="Nature">
        <title>The male-specific region of the human Y chromosome is a mosaic of discrete sequence classes.</title>
        <authorList>
            <person name="Skaletsky H."/>
            <person name="Kuroda-Kawaguchi T."/>
            <person name="Minx P.J."/>
            <person name="Cordum H.S."/>
            <person name="Hillier L.W."/>
            <person name="Brown L.G."/>
            <person name="Repping S."/>
            <person name="Pyntikova T."/>
            <person name="Ali J."/>
            <person name="Bieri T."/>
            <person name="Chinwalla A."/>
            <person name="Delehaunty A."/>
            <person name="Delehaunty K."/>
            <person name="Du H."/>
            <person name="Fewell G."/>
            <person name="Fulton L."/>
            <person name="Fulton R."/>
            <person name="Graves T.A."/>
            <person name="Hou S.-F."/>
            <person name="Latrielle P."/>
            <person name="Leonard S."/>
            <person name="Mardis E."/>
            <person name="Maupin R."/>
            <person name="McPherson J."/>
            <person name="Miner T."/>
            <person name="Nash W."/>
            <person name="Nguyen C."/>
            <person name="Ozersky P."/>
            <person name="Pepin K."/>
            <person name="Rock S."/>
            <person name="Rohlfing T."/>
            <person name="Scott K."/>
            <person name="Schultz B."/>
            <person name="Strong C."/>
            <person name="Tin-Wollam A."/>
            <person name="Yang S.-P."/>
            <person name="Waterston R.H."/>
            <person name="Wilson R.K."/>
            <person name="Rozen S."/>
            <person name="Page D.C."/>
        </authorList>
    </citation>
    <scope>NUCLEOTIDE SEQUENCE [MRNA]</scope>
    <source>
        <tissue>Testis</tissue>
    </source>
</reference>
<reference key="3">
    <citation type="journal article" date="2004" name="Nat. Genet.">
        <title>Complete sequencing and characterization of 21,243 full-length human cDNAs.</title>
        <authorList>
            <person name="Ota T."/>
            <person name="Suzuki Y."/>
            <person name="Nishikawa T."/>
            <person name="Otsuki T."/>
            <person name="Sugiyama T."/>
            <person name="Irie R."/>
            <person name="Wakamatsu A."/>
            <person name="Hayashi K."/>
            <person name="Sato H."/>
            <person name="Nagai K."/>
            <person name="Kimura K."/>
            <person name="Makita H."/>
            <person name="Sekine M."/>
            <person name="Obayashi M."/>
            <person name="Nishi T."/>
            <person name="Shibahara T."/>
            <person name="Tanaka T."/>
            <person name="Ishii S."/>
            <person name="Yamamoto J."/>
            <person name="Saito K."/>
            <person name="Kawai Y."/>
            <person name="Isono Y."/>
            <person name="Nakamura Y."/>
            <person name="Nagahari K."/>
            <person name="Murakami K."/>
            <person name="Yasuda T."/>
            <person name="Iwayanagi T."/>
            <person name="Wagatsuma M."/>
            <person name="Shiratori A."/>
            <person name="Sudo H."/>
            <person name="Hosoiri T."/>
            <person name="Kaku Y."/>
            <person name="Kodaira H."/>
            <person name="Kondo H."/>
            <person name="Sugawara M."/>
            <person name="Takahashi M."/>
            <person name="Kanda K."/>
            <person name="Yokoi T."/>
            <person name="Furuya T."/>
            <person name="Kikkawa E."/>
            <person name="Omura Y."/>
            <person name="Abe K."/>
            <person name="Kamihara K."/>
            <person name="Katsuta N."/>
            <person name="Sato K."/>
            <person name="Tanikawa M."/>
            <person name="Yamazaki M."/>
            <person name="Ninomiya K."/>
            <person name="Ishibashi T."/>
            <person name="Yamashita H."/>
            <person name="Murakawa K."/>
            <person name="Fujimori K."/>
            <person name="Tanai H."/>
            <person name="Kimata M."/>
            <person name="Watanabe M."/>
            <person name="Hiraoka S."/>
            <person name="Chiba Y."/>
            <person name="Ishida S."/>
            <person name="Ono Y."/>
            <person name="Takiguchi S."/>
            <person name="Watanabe S."/>
            <person name="Yosida M."/>
            <person name="Hotuta T."/>
            <person name="Kusano J."/>
            <person name="Kanehori K."/>
            <person name="Takahashi-Fujii A."/>
            <person name="Hara H."/>
            <person name="Tanase T.-O."/>
            <person name="Nomura Y."/>
            <person name="Togiya S."/>
            <person name="Komai F."/>
            <person name="Hara R."/>
            <person name="Takeuchi K."/>
            <person name="Arita M."/>
            <person name="Imose N."/>
            <person name="Musashino K."/>
            <person name="Yuuki H."/>
            <person name="Oshima A."/>
            <person name="Sasaki N."/>
            <person name="Aotsuka S."/>
            <person name="Yoshikawa Y."/>
            <person name="Matsunawa H."/>
            <person name="Ichihara T."/>
            <person name="Shiohata N."/>
            <person name="Sano S."/>
            <person name="Moriya S."/>
            <person name="Momiyama H."/>
            <person name="Satoh N."/>
            <person name="Takami S."/>
            <person name="Terashima Y."/>
            <person name="Suzuki O."/>
            <person name="Nakagawa S."/>
            <person name="Senoh A."/>
            <person name="Mizoguchi H."/>
            <person name="Goto Y."/>
            <person name="Shimizu F."/>
            <person name="Wakebe H."/>
            <person name="Hishigaki H."/>
            <person name="Watanabe T."/>
            <person name="Sugiyama A."/>
            <person name="Takemoto M."/>
            <person name="Kawakami B."/>
            <person name="Yamazaki M."/>
            <person name="Watanabe K."/>
            <person name="Kumagai A."/>
            <person name="Itakura S."/>
            <person name="Fukuzumi Y."/>
            <person name="Fujimori Y."/>
            <person name="Komiyama M."/>
            <person name="Tashiro H."/>
            <person name="Tanigami A."/>
            <person name="Fujiwara T."/>
            <person name="Ono T."/>
            <person name="Yamada K."/>
            <person name="Fujii Y."/>
            <person name="Ozaki K."/>
            <person name="Hirao M."/>
            <person name="Ohmori Y."/>
            <person name="Kawabata A."/>
            <person name="Hikiji T."/>
            <person name="Kobatake N."/>
            <person name="Inagaki H."/>
            <person name="Ikema Y."/>
            <person name="Okamoto S."/>
            <person name="Okitani R."/>
            <person name="Kawakami T."/>
            <person name="Noguchi S."/>
            <person name="Itoh T."/>
            <person name="Shigeta K."/>
            <person name="Senba T."/>
            <person name="Matsumura K."/>
            <person name="Nakajima Y."/>
            <person name="Mizuno T."/>
            <person name="Morinaga M."/>
            <person name="Sasaki M."/>
            <person name="Togashi T."/>
            <person name="Oyama M."/>
            <person name="Hata H."/>
            <person name="Watanabe M."/>
            <person name="Komatsu T."/>
            <person name="Mizushima-Sugano J."/>
            <person name="Satoh T."/>
            <person name="Shirai Y."/>
            <person name="Takahashi Y."/>
            <person name="Nakagawa K."/>
            <person name="Okumura K."/>
            <person name="Nagase T."/>
            <person name="Nomura N."/>
            <person name="Kikuchi H."/>
            <person name="Masuho Y."/>
            <person name="Yamashita R."/>
            <person name="Nakai K."/>
            <person name="Yada T."/>
            <person name="Nakamura Y."/>
            <person name="Ohara O."/>
            <person name="Isogai T."/>
            <person name="Sugano S."/>
        </authorList>
    </citation>
    <scope>NUCLEOTIDE SEQUENCE [LARGE SCALE MRNA]</scope>
    <source>
        <tissue>Testis</tissue>
    </source>
</reference>
<reference key="4">
    <citation type="journal article" date="2004" name="Genome Res.">
        <title>The status, quality, and expansion of the NIH full-length cDNA project: the Mammalian Gene Collection (MGC).</title>
        <authorList>
            <consortium name="The MGC Project Team"/>
        </authorList>
    </citation>
    <scope>NUCLEOTIDE SEQUENCE [LARGE SCALE MRNA]</scope>
</reference>
<gene>
    <name type="primary">TGIF2LY</name>
    <name type="synonym">TGIFLY</name>
</gene>
<accession>Q8IUE0</accession>
<accession>A2VCU1</accession>
<dbReference type="EMBL" id="AJ427750">
    <property type="protein sequence ID" value="CAD20751.1"/>
    <property type="molecule type" value="Genomic_DNA"/>
</dbReference>
<dbReference type="EMBL" id="AF332223">
    <property type="protein sequence ID" value="AAK13475.1"/>
    <property type="molecule type" value="mRNA"/>
</dbReference>
<dbReference type="EMBL" id="AK292609">
    <property type="protein sequence ID" value="BAF85298.1"/>
    <property type="molecule type" value="mRNA"/>
</dbReference>
<dbReference type="EMBL" id="BC128604">
    <property type="protein sequence ID" value="AAI28605.1"/>
    <property type="molecule type" value="mRNA"/>
</dbReference>
<dbReference type="CCDS" id="CCDS14775.1"/>
<dbReference type="RefSeq" id="NP_631960.1">
    <property type="nucleotide sequence ID" value="NM_139214.3"/>
</dbReference>
<dbReference type="BMRB" id="Q8IUE0"/>
<dbReference type="SMR" id="Q8IUE0"/>
<dbReference type="BioGRID" id="124750">
    <property type="interactions" value="32"/>
</dbReference>
<dbReference type="FunCoup" id="Q8IUE0">
    <property type="interactions" value="56"/>
</dbReference>
<dbReference type="IntAct" id="Q8IUE0">
    <property type="interactions" value="32"/>
</dbReference>
<dbReference type="MINT" id="Q8IUE0"/>
<dbReference type="STRING" id="9606.ENSP00000453750"/>
<dbReference type="iPTMnet" id="Q8IUE0"/>
<dbReference type="PhosphoSitePlus" id="Q8IUE0"/>
<dbReference type="BioMuta" id="TGIF2LY"/>
<dbReference type="DMDM" id="44888509"/>
<dbReference type="MassIVE" id="Q8IUE0"/>
<dbReference type="PeptideAtlas" id="Q8IUE0"/>
<dbReference type="Pumba" id="Q8IUE0"/>
<dbReference type="Antibodypedia" id="5309">
    <property type="antibodies" value="98 antibodies from 21 providers"/>
</dbReference>
<dbReference type="DNASU" id="90655"/>
<dbReference type="Ensembl" id="ENST00000321217.5">
    <property type="protein sequence ID" value="ENSP00000318502.4"/>
    <property type="gene ID" value="ENSG00000176679.9"/>
</dbReference>
<dbReference type="Ensembl" id="ENST00000559055.2">
    <property type="protein sequence ID" value="ENSP00000453750.1"/>
    <property type="gene ID" value="ENSG00000176679.9"/>
</dbReference>
<dbReference type="GeneID" id="90655"/>
<dbReference type="KEGG" id="hsa:90655"/>
<dbReference type="MANE-Select" id="ENST00000321217.5">
    <property type="protein sequence ID" value="ENSP00000318502.4"/>
    <property type="RefSeq nucleotide sequence ID" value="NM_139214.3"/>
    <property type="RefSeq protein sequence ID" value="NP_631960.1"/>
</dbReference>
<dbReference type="UCSC" id="uc004fqk.4">
    <property type="organism name" value="human"/>
</dbReference>
<dbReference type="AGR" id="HGNC:18569"/>
<dbReference type="CTD" id="90655"/>
<dbReference type="GeneCards" id="TGIF2LY"/>
<dbReference type="HGNC" id="HGNC:18569">
    <property type="gene designation" value="TGIF2LY"/>
</dbReference>
<dbReference type="HPA" id="ENSG00000176679">
    <property type="expression patterns" value="Tissue enriched (testis)"/>
</dbReference>
<dbReference type="MIM" id="400025">
    <property type="type" value="gene"/>
</dbReference>
<dbReference type="neXtProt" id="NX_Q8IUE0"/>
<dbReference type="PharmGKB" id="PA38581"/>
<dbReference type="VEuPathDB" id="HostDB:ENSG00000176679"/>
<dbReference type="GeneTree" id="ENSGT00940000163848"/>
<dbReference type="HOGENOM" id="CLU_1460844_0_0_1"/>
<dbReference type="InParanoid" id="Q8IUE0"/>
<dbReference type="OMA" id="QERRYQS"/>
<dbReference type="PAN-GO" id="Q8IUE0">
    <property type="GO annotations" value="3 GO annotations based on evolutionary models"/>
</dbReference>
<dbReference type="PhylomeDB" id="Q8IUE0"/>
<dbReference type="TreeFam" id="TF318093"/>
<dbReference type="PathwayCommons" id="Q8IUE0"/>
<dbReference type="SignaLink" id="Q8IUE0"/>
<dbReference type="BioGRID-ORCS" id="90655">
    <property type="hits" value="9 hits in 684 CRISPR screens"/>
</dbReference>
<dbReference type="GenomeRNAi" id="90655"/>
<dbReference type="Pharos" id="Q8IUE0">
    <property type="development level" value="Tdark"/>
</dbReference>
<dbReference type="PRO" id="PR:Q8IUE0"/>
<dbReference type="Proteomes" id="UP000005640">
    <property type="component" value="Chromosome Y"/>
</dbReference>
<dbReference type="RNAct" id="Q8IUE0">
    <property type="molecule type" value="protein"/>
</dbReference>
<dbReference type="Bgee" id="ENSG00000176679">
    <property type="expression patterns" value="Expressed in primordial germ cell in gonad and 4 other cell types or tissues"/>
</dbReference>
<dbReference type="GO" id="GO:0000785">
    <property type="term" value="C:chromatin"/>
    <property type="evidence" value="ECO:0000247"/>
    <property type="project" value="NTNU_SB"/>
</dbReference>
<dbReference type="GO" id="GO:0005634">
    <property type="term" value="C:nucleus"/>
    <property type="evidence" value="ECO:0007669"/>
    <property type="project" value="UniProtKB-SubCell"/>
</dbReference>
<dbReference type="GO" id="GO:0000981">
    <property type="term" value="F:DNA-binding transcription factor activity, RNA polymerase II-specific"/>
    <property type="evidence" value="ECO:0000247"/>
    <property type="project" value="NTNU_SB"/>
</dbReference>
<dbReference type="GO" id="GO:0001227">
    <property type="term" value="F:DNA-binding transcription repressor activity, RNA polymerase II-specific"/>
    <property type="evidence" value="ECO:0000318"/>
    <property type="project" value="GO_Central"/>
</dbReference>
<dbReference type="GO" id="GO:1990837">
    <property type="term" value="F:sequence-specific double-stranded DNA binding"/>
    <property type="evidence" value="ECO:0000314"/>
    <property type="project" value="ARUK-UCL"/>
</dbReference>
<dbReference type="GO" id="GO:0000122">
    <property type="term" value="P:negative regulation of transcription by RNA polymerase II"/>
    <property type="evidence" value="ECO:0000318"/>
    <property type="project" value="GO_Central"/>
</dbReference>
<dbReference type="CDD" id="cd00086">
    <property type="entry name" value="homeodomain"/>
    <property type="match status" value="1"/>
</dbReference>
<dbReference type="FunFam" id="1.10.10.60:FF:000059">
    <property type="entry name" value="TGFB-induced factor homeobox 1"/>
    <property type="match status" value="1"/>
</dbReference>
<dbReference type="Gene3D" id="1.10.10.60">
    <property type="entry name" value="Homeodomain-like"/>
    <property type="match status" value="1"/>
</dbReference>
<dbReference type="InterPro" id="IPR001356">
    <property type="entry name" value="HD"/>
</dbReference>
<dbReference type="InterPro" id="IPR009057">
    <property type="entry name" value="Homeodomain-like_sf"/>
</dbReference>
<dbReference type="InterPro" id="IPR008422">
    <property type="entry name" value="KN_HD"/>
</dbReference>
<dbReference type="InterPro" id="IPR050224">
    <property type="entry name" value="TALE_homeobox"/>
</dbReference>
<dbReference type="PANTHER" id="PTHR11850">
    <property type="entry name" value="HOMEOBOX PROTEIN TRANSCRIPTION FACTORS"/>
    <property type="match status" value="1"/>
</dbReference>
<dbReference type="Pfam" id="PF05920">
    <property type="entry name" value="Homeobox_KN"/>
    <property type="match status" value="1"/>
</dbReference>
<dbReference type="SMART" id="SM00389">
    <property type="entry name" value="HOX"/>
    <property type="match status" value="1"/>
</dbReference>
<dbReference type="SUPFAM" id="SSF46689">
    <property type="entry name" value="Homeodomain-like"/>
    <property type="match status" value="1"/>
</dbReference>
<dbReference type="PROSITE" id="PS50071">
    <property type="entry name" value="HOMEOBOX_2"/>
    <property type="match status" value="1"/>
</dbReference>
<proteinExistence type="evidence at protein level"/>
<keyword id="KW-0238">DNA-binding</keyword>
<keyword id="KW-0371">Homeobox</keyword>
<keyword id="KW-0539">Nucleus</keyword>
<keyword id="KW-1185">Reference proteome</keyword>
<keyword id="KW-0804">Transcription</keyword>
<keyword id="KW-0805">Transcription regulation</keyword>
<feature type="chain" id="PRO_0000049332" description="Homeobox protein TGIF2LY">
    <location>
        <begin position="1"/>
        <end position="185"/>
    </location>
</feature>
<feature type="DNA-binding region" description="Homeobox; TALE-type" evidence="1">
    <location>
        <begin position="48"/>
        <end position="111"/>
    </location>
</feature>
<feature type="region of interest" description="Disordered" evidence="2">
    <location>
        <begin position="1"/>
        <end position="58"/>
    </location>
</feature>
<feature type="region of interest" description="Disordered" evidence="2">
    <location>
        <begin position="166"/>
        <end position="185"/>
    </location>
</feature>
<feature type="compositionally biased region" description="Polar residues" evidence="2">
    <location>
        <begin position="21"/>
        <end position="39"/>
    </location>
</feature>
<evidence type="ECO:0000255" key="1">
    <source>
        <dbReference type="PROSITE-ProRule" id="PRU00108"/>
    </source>
</evidence>
<evidence type="ECO:0000256" key="2">
    <source>
        <dbReference type="SAM" id="MobiDB-lite"/>
    </source>
</evidence>
<evidence type="ECO:0000305" key="3"/>
<name>TF2LY_HUMAN</name>
<protein>
    <recommendedName>
        <fullName>Homeobox protein TGIF2LY</fullName>
    </recommendedName>
    <alternativeName>
        <fullName>TGF-beta-induced transcription factor 2-like protein</fullName>
    </alternativeName>
    <alternativeName>
        <fullName>TGFB-induced factor 2-like protein, Y-linked</fullName>
    </alternativeName>
    <alternativeName>
        <fullName>TGIF-like on the Y</fullName>
    </alternativeName>
</protein>
<sequence>MEAAADGPAETQSPVEKDSPAKTQSPAQDTSIMSRNNADTGRVLALPEHKKKRKGNLPAESVKILRDWMYKHRFKAYPSEEEKQMLSEKTNLSLLRISNWFINARRRILPDMLQQRRNDPIIGHKTGKDAHATHLQSTEASVPAKSGPVVQTMYKACPCGPCQRARCQERSNQIRSRPLARSSPE</sequence>